<proteinExistence type="inferred from homology"/>
<organism>
    <name type="scientific">Paraburkholderia phytofirmans (strain DSM 17436 / LMG 22146 / PsJN)</name>
    <name type="common">Burkholderia phytofirmans</name>
    <dbReference type="NCBI Taxonomy" id="398527"/>
    <lineage>
        <taxon>Bacteria</taxon>
        <taxon>Pseudomonadati</taxon>
        <taxon>Pseudomonadota</taxon>
        <taxon>Betaproteobacteria</taxon>
        <taxon>Burkholderiales</taxon>
        <taxon>Burkholderiaceae</taxon>
        <taxon>Paraburkholderia</taxon>
    </lineage>
</organism>
<gene>
    <name evidence="1" type="primary">aceK</name>
    <name type="ordered locus">Bphyt_0463</name>
</gene>
<accession>B2SWU4</accession>
<sequence>MNHFPKLLSSQIGFDLAQTMLEGFDRHYRIFRDAAIHAKTLFEKGDWHGLQKLARDRITSYDERVDECVELLEDEYDAEKIDSEVWQQIKLHYIGLLTTHRQPECAETFFNSVCCKILHRSYFNNDFIFVRPAISTEYIENDEPAAKPTYRAYYPGKDGLAATLERIVTNFQLEPQFEDLTRDVGCVMQAIHDAFGAFDEAPNFQIHVLSSLFYRNKSAYIVGRIINGDLLLPFAVPLRHVKPGVLALDTVLLKREQLLIIFSFSHSYFLVDMEVPSAYVEFLGTIMPGKPKAEIYTSVGLQKQGKNLFYRDLLHHLSHSSDQFIIAPGIKGLVMLVFTLPSFPYVFKLIKDNFPPPKETTRAQIQSKYQLVKRHDRLGRMADTLEYSSVALPRSRLDDALVRELEKEVPSLLEYEGENLVIRHMYIERRMVPLNLFLQNGNDEDVEHGIKEYGNAVKELMQANIFPGDMLYKNFGVTRHGRVVFYDYDEIEYLTDCNVRAVPAPRNEEDEMSGEPWYSVGPHDIFPETYGTFLLGDPRVRRSFMQHHADFFDPALWQRHKDHLLKGELPDFFPYDDSARFCNCYPERFADAAGRASPEPDAPADARSVRVA</sequence>
<protein>
    <recommendedName>
        <fullName evidence="1">Isocitrate dehydrogenase kinase/phosphatase</fullName>
        <shortName evidence="1">IDH kinase/phosphatase</shortName>
        <shortName evidence="1">IDHK/P</shortName>
        <ecNumber evidence="1">2.7.11.5</ecNumber>
        <ecNumber evidence="1">3.1.3.-</ecNumber>
    </recommendedName>
</protein>
<comment type="function">
    <text evidence="1">Bifunctional enzyme which can phosphorylate or dephosphorylate isocitrate dehydrogenase (IDH) on a specific serine residue. This is a regulatory mechanism which enables bacteria to bypass the Krebs cycle via the glyoxylate shunt in response to the source of carbon. When bacteria are grown on glucose, IDH is fully active and unphosphorylated, but when grown on acetate or ethanol, the activity of IDH declines drastically concomitant with its phosphorylation.</text>
</comment>
<comment type="catalytic activity">
    <reaction evidence="1">
        <text>L-seryl-[isocitrate dehydrogenase] + ATP = O-phospho-L-seryl-[isocitrate dehydrogenase] + ADP + H(+)</text>
        <dbReference type="Rhea" id="RHEA:43540"/>
        <dbReference type="Rhea" id="RHEA-COMP:10605"/>
        <dbReference type="Rhea" id="RHEA-COMP:10606"/>
        <dbReference type="ChEBI" id="CHEBI:15378"/>
        <dbReference type="ChEBI" id="CHEBI:29999"/>
        <dbReference type="ChEBI" id="CHEBI:30616"/>
        <dbReference type="ChEBI" id="CHEBI:83421"/>
        <dbReference type="ChEBI" id="CHEBI:456216"/>
        <dbReference type="EC" id="2.7.11.5"/>
    </reaction>
</comment>
<comment type="subcellular location">
    <subcellularLocation>
        <location evidence="1">Cytoplasm</location>
    </subcellularLocation>
</comment>
<comment type="similarity">
    <text evidence="1">Belongs to the AceK family.</text>
</comment>
<name>ACEK_PARPJ</name>
<keyword id="KW-0067">ATP-binding</keyword>
<keyword id="KW-0963">Cytoplasm</keyword>
<keyword id="KW-0329">Glyoxylate bypass</keyword>
<keyword id="KW-0378">Hydrolase</keyword>
<keyword id="KW-0418">Kinase</keyword>
<keyword id="KW-0547">Nucleotide-binding</keyword>
<keyword id="KW-0904">Protein phosphatase</keyword>
<keyword id="KW-0723">Serine/threonine-protein kinase</keyword>
<keyword id="KW-0808">Transferase</keyword>
<keyword id="KW-0816">Tricarboxylic acid cycle</keyword>
<evidence type="ECO:0000255" key="1">
    <source>
        <dbReference type="HAMAP-Rule" id="MF_00747"/>
    </source>
</evidence>
<evidence type="ECO:0000256" key="2">
    <source>
        <dbReference type="SAM" id="MobiDB-lite"/>
    </source>
</evidence>
<dbReference type="EC" id="2.7.11.5" evidence="1"/>
<dbReference type="EC" id="3.1.3.-" evidence="1"/>
<dbReference type="EMBL" id="CP001052">
    <property type="protein sequence ID" value="ACD14888.1"/>
    <property type="molecule type" value="Genomic_DNA"/>
</dbReference>
<dbReference type="RefSeq" id="WP_012431531.1">
    <property type="nucleotide sequence ID" value="NC_010681.1"/>
</dbReference>
<dbReference type="SMR" id="B2SWU4"/>
<dbReference type="STRING" id="398527.Bphyt_0463"/>
<dbReference type="KEGG" id="bpy:Bphyt_0463"/>
<dbReference type="eggNOG" id="COG4579">
    <property type="taxonomic scope" value="Bacteria"/>
</dbReference>
<dbReference type="HOGENOM" id="CLU_033804_1_1_4"/>
<dbReference type="OrthoDB" id="5287793at2"/>
<dbReference type="Proteomes" id="UP000001739">
    <property type="component" value="Chromosome 1"/>
</dbReference>
<dbReference type="GO" id="GO:0005737">
    <property type="term" value="C:cytoplasm"/>
    <property type="evidence" value="ECO:0007669"/>
    <property type="project" value="UniProtKB-SubCell"/>
</dbReference>
<dbReference type="GO" id="GO:0008772">
    <property type="term" value="F:[isocitrate dehydrogenase (NADP+)] kinase activity"/>
    <property type="evidence" value="ECO:0007669"/>
    <property type="project" value="UniProtKB-UniRule"/>
</dbReference>
<dbReference type="GO" id="GO:0016208">
    <property type="term" value="F:AMP binding"/>
    <property type="evidence" value="ECO:0007669"/>
    <property type="project" value="TreeGrafter"/>
</dbReference>
<dbReference type="GO" id="GO:0005524">
    <property type="term" value="F:ATP binding"/>
    <property type="evidence" value="ECO:0007669"/>
    <property type="project" value="UniProtKB-UniRule"/>
</dbReference>
<dbReference type="GO" id="GO:0004721">
    <property type="term" value="F:phosphoprotein phosphatase activity"/>
    <property type="evidence" value="ECO:0007669"/>
    <property type="project" value="UniProtKB-KW"/>
</dbReference>
<dbReference type="GO" id="GO:0004674">
    <property type="term" value="F:protein serine/threonine kinase activity"/>
    <property type="evidence" value="ECO:0007669"/>
    <property type="project" value="UniProtKB-KW"/>
</dbReference>
<dbReference type="GO" id="GO:0006006">
    <property type="term" value="P:glucose metabolic process"/>
    <property type="evidence" value="ECO:0007669"/>
    <property type="project" value="InterPro"/>
</dbReference>
<dbReference type="GO" id="GO:0006097">
    <property type="term" value="P:glyoxylate cycle"/>
    <property type="evidence" value="ECO:0007669"/>
    <property type="project" value="UniProtKB-UniRule"/>
</dbReference>
<dbReference type="GO" id="GO:0006099">
    <property type="term" value="P:tricarboxylic acid cycle"/>
    <property type="evidence" value="ECO:0007669"/>
    <property type="project" value="UniProtKB-UniRule"/>
</dbReference>
<dbReference type="HAMAP" id="MF_00747">
    <property type="entry name" value="AceK"/>
    <property type="match status" value="1"/>
</dbReference>
<dbReference type="InterPro" id="IPR046855">
    <property type="entry name" value="AceK_kinase"/>
</dbReference>
<dbReference type="InterPro" id="IPR046854">
    <property type="entry name" value="AceK_regulatory"/>
</dbReference>
<dbReference type="InterPro" id="IPR010452">
    <property type="entry name" value="Isocitrate_DH_AceK"/>
</dbReference>
<dbReference type="NCBIfam" id="NF002804">
    <property type="entry name" value="PRK02946.1"/>
    <property type="match status" value="1"/>
</dbReference>
<dbReference type="PANTHER" id="PTHR39559">
    <property type="match status" value="1"/>
</dbReference>
<dbReference type="PANTHER" id="PTHR39559:SF1">
    <property type="entry name" value="ISOCITRATE DEHYDROGENASE KINASE_PHOSPHATASE"/>
    <property type="match status" value="1"/>
</dbReference>
<dbReference type="Pfam" id="PF06315">
    <property type="entry name" value="AceK_kinase"/>
    <property type="match status" value="1"/>
</dbReference>
<dbReference type="Pfam" id="PF20423">
    <property type="entry name" value="AceK_regulatory"/>
    <property type="match status" value="1"/>
</dbReference>
<dbReference type="PIRSF" id="PIRSF000719">
    <property type="entry name" value="AceK"/>
    <property type="match status" value="1"/>
</dbReference>
<feature type="chain" id="PRO_1000133262" description="Isocitrate dehydrogenase kinase/phosphatase">
    <location>
        <begin position="1"/>
        <end position="612"/>
    </location>
</feature>
<feature type="region of interest" description="Disordered" evidence="2">
    <location>
        <begin position="593"/>
        <end position="612"/>
    </location>
</feature>
<feature type="active site" evidence="1">
    <location>
        <position position="383"/>
    </location>
</feature>
<feature type="binding site" evidence="1">
    <location>
        <begin position="327"/>
        <end position="333"/>
    </location>
    <ligand>
        <name>ATP</name>
        <dbReference type="ChEBI" id="CHEBI:30616"/>
    </ligand>
</feature>
<feature type="binding site" evidence="1">
    <location>
        <position position="348"/>
    </location>
    <ligand>
        <name>ATP</name>
        <dbReference type="ChEBI" id="CHEBI:30616"/>
    </ligand>
</feature>
<reference key="1">
    <citation type="journal article" date="2011" name="J. Bacteriol.">
        <title>Complete genome sequence of the plant growth-promoting endophyte Burkholderia phytofirmans strain PsJN.</title>
        <authorList>
            <person name="Weilharter A."/>
            <person name="Mitter B."/>
            <person name="Shin M.V."/>
            <person name="Chain P.S."/>
            <person name="Nowak J."/>
            <person name="Sessitsch A."/>
        </authorList>
    </citation>
    <scope>NUCLEOTIDE SEQUENCE [LARGE SCALE GENOMIC DNA]</scope>
    <source>
        <strain>DSM 17436 / LMG 22146 / PsJN</strain>
    </source>
</reference>